<evidence type="ECO:0000250" key="1"/>
<evidence type="ECO:0000255" key="2"/>
<evidence type="ECO:0000255" key="3">
    <source>
        <dbReference type="PROSITE-ProRule" id="PRU00114"/>
    </source>
</evidence>
<evidence type="ECO:0000255" key="4">
    <source>
        <dbReference type="PROSITE-ProRule" id="PRU00548"/>
    </source>
</evidence>
<evidence type="ECO:0000256" key="5">
    <source>
        <dbReference type="SAM" id="MobiDB-lite"/>
    </source>
</evidence>
<evidence type="ECO:0000305" key="6"/>
<dbReference type="EMBL" id="CR859495">
    <property type="protein sequence ID" value="CAH91664.1"/>
    <property type="molecule type" value="mRNA"/>
</dbReference>
<dbReference type="RefSeq" id="NP_001125975.1">
    <property type="nucleotide sequence ID" value="NM_001132503.1"/>
</dbReference>
<dbReference type="SMR" id="Q5R996"/>
<dbReference type="FunCoup" id="Q5R996">
    <property type="interactions" value="341"/>
</dbReference>
<dbReference type="STRING" id="9601.ENSPPYP00000018260"/>
<dbReference type="GlyCosmos" id="Q5R996">
    <property type="glycosylation" value="1 site, No reported glycans"/>
</dbReference>
<dbReference type="GeneID" id="100172913"/>
<dbReference type="KEGG" id="pon:100172913"/>
<dbReference type="CTD" id="10384"/>
<dbReference type="eggNOG" id="ENOG502QSRZ">
    <property type="taxonomic scope" value="Eukaryota"/>
</dbReference>
<dbReference type="InParanoid" id="Q5R996"/>
<dbReference type="OrthoDB" id="8901134at2759"/>
<dbReference type="Proteomes" id="UP000001595">
    <property type="component" value="Unplaced"/>
</dbReference>
<dbReference type="GO" id="GO:0009897">
    <property type="term" value="C:external side of plasma membrane"/>
    <property type="evidence" value="ECO:0007669"/>
    <property type="project" value="TreeGrafter"/>
</dbReference>
<dbReference type="GO" id="GO:0005102">
    <property type="term" value="F:signaling receptor binding"/>
    <property type="evidence" value="ECO:0007669"/>
    <property type="project" value="TreeGrafter"/>
</dbReference>
<dbReference type="GO" id="GO:0001817">
    <property type="term" value="P:regulation of cytokine production"/>
    <property type="evidence" value="ECO:0007669"/>
    <property type="project" value="TreeGrafter"/>
</dbReference>
<dbReference type="GO" id="GO:0050852">
    <property type="term" value="P:T cell receptor signaling pathway"/>
    <property type="evidence" value="ECO:0007669"/>
    <property type="project" value="TreeGrafter"/>
</dbReference>
<dbReference type="CDD" id="cd05713">
    <property type="entry name" value="IgV_MOG_like"/>
    <property type="match status" value="1"/>
</dbReference>
<dbReference type="CDD" id="cd15820">
    <property type="entry name" value="SPRY_PRY_BTN3"/>
    <property type="match status" value="1"/>
</dbReference>
<dbReference type="FunFam" id="2.60.120.920:FF:000004">
    <property type="entry name" value="Butyrophilin subfamily 1 member A1"/>
    <property type="match status" value="1"/>
</dbReference>
<dbReference type="FunFam" id="2.60.40.10:FF:000088">
    <property type="entry name" value="Butyrophilin subfamily 1 member A1"/>
    <property type="match status" value="1"/>
</dbReference>
<dbReference type="FunFam" id="2.60.40.10:FF:000208">
    <property type="entry name" value="Butyrophilin subfamily 1 member A1"/>
    <property type="match status" value="1"/>
</dbReference>
<dbReference type="Gene3D" id="2.60.120.920">
    <property type="match status" value="1"/>
</dbReference>
<dbReference type="Gene3D" id="2.60.40.10">
    <property type="entry name" value="Immunoglobulins"/>
    <property type="match status" value="2"/>
</dbReference>
<dbReference type="InterPro" id="IPR001870">
    <property type="entry name" value="B30.2/SPRY"/>
</dbReference>
<dbReference type="InterPro" id="IPR043136">
    <property type="entry name" value="B30.2/SPRY_sf"/>
</dbReference>
<dbReference type="InterPro" id="IPR053896">
    <property type="entry name" value="BTN3A2-like_Ig-C"/>
</dbReference>
<dbReference type="InterPro" id="IPR003879">
    <property type="entry name" value="Butyrophylin_SPRY"/>
</dbReference>
<dbReference type="InterPro" id="IPR013320">
    <property type="entry name" value="ConA-like_dom_sf"/>
</dbReference>
<dbReference type="InterPro" id="IPR007110">
    <property type="entry name" value="Ig-like_dom"/>
</dbReference>
<dbReference type="InterPro" id="IPR036179">
    <property type="entry name" value="Ig-like_dom_sf"/>
</dbReference>
<dbReference type="InterPro" id="IPR013783">
    <property type="entry name" value="Ig-like_fold"/>
</dbReference>
<dbReference type="InterPro" id="IPR003599">
    <property type="entry name" value="Ig_sub"/>
</dbReference>
<dbReference type="InterPro" id="IPR013106">
    <property type="entry name" value="Ig_V-set"/>
</dbReference>
<dbReference type="InterPro" id="IPR050504">
    <property type="entry name" value="IgSF_BTN/MOG"/>
</dbReference>
<dbReference type="InterPro" id="IPR006574">
    <property type="entry name" value="PRY"/>
</dbReference>
<dbReference type="InterPro" id="IPR003877">
    <property type="entry name" value="SPRY_dom"/>
</dbReference>
<dbReference type="InterPro" id="IPR037954">
    <property type="entry name" value="SPRY_PRY_BTN3"/>
</dbReference>
<dbReference type="PANTHER" id="PTHR24100">
    <property type="entry name" value="BUTYROPHILIN"/>
    <property type="match status" value="1"/>
</dbReference>
<dbReference type="PANTHER" id="PTHR24100:SF56">
    <property type="entry name" value="BUTYROPHILIN SUBFAMILY 3 MEMBER A3"/>
    <property type="match status" value="1"/>
</dbReference>
<dbReference type="Pfam" id="PF22705">
    <property type="entry name" value="C2-set_3"/>
    <property type="match status" value="1"/>
</dbReference>
<dbReference type="Pfam" id="PF13765">
    <property type="entry name" value="PRY"/>
    <property type="match status" value="1"/>
</dbReference>
<dbReference type="Pfam" id="PF00622">
    <property type="entry name" value="SPRY"/>
    <property type="match status" value="1"/>
</dbReference>
<dbReference type="Pfam" id="PF07686">
    <property type="entry name" value="V-set"/>
    <property type="match status" value="1"/>
</dbReference>
<dbReference type="PRINTS" id="PR01407">
    <property type="entry name" value="BUTYPHLNCDUF"/>
</dbReference>
<dbReference type="SMART" id="SM00409">
    <property type="entry name" value="IG"/>
    <property type="match status" value="1"/>
</dbReference>
<dbReference type="SMART" id="SM00406">
    <property type="entry name" value="IGv"/>
    <property type="match status" value="1"/>
</dbReference>
<dbReference type="SMART" id="SM00589">
    <property type="entry name" value="PRY"/>
    <property type="match status" value="1"/>
</dbReference>
<dbReference type="SMART" id="SM00449">
    <property type="entry name" value="SPRY"/>
    <property type="match status" value="1"/>
</dbReference>
<dbReference type="SUPFAM" id="SSF49899">
    <property type="entry name" value="Concanavalin A-like lectins/glucanases"/>
    <property type="match status" value="1"/>
</dbReference>
<dbReference type="SUPFAM" id="SSF48726">
    <property type="entry name" value="Immunoglobulin"/>
    <property type="match status" value="2"/>
</dbReference>
<dbReference type="PROSITE" id="PS50188">
    <property type="entry name" value="B302_SPRY"/>
    <property type="match status" value="1"/>
</dbReference>
<dbReference type="PROSITE" id="PS50835">
    <property type="entry name" value="IG_LIKE"/>
    <property type="match status" value="2"/>
</dbReference>
<sequence>MKMASSLACLLLNFHVSVFLVQLLTPCSAQFSVLGPSGPILAMVGEDADLPCHLFPTMSAETMELRWVSSSLRQVVNVYADGKEVEDRQSAPYRGRTSILRDGITAGKAALRIHNVTASDSGKYLCYFQDGDFYEKALVELKVAALGSDLHVEVKGYENGGIHLECRSTGWYPQPQIKWSDAKGENIPAVEAPVVADGVGLYAVAASVIMRGGSGGGVSCIIRNSLLGLEKTASISIADPFFTSAQPWIAALAGTLPISLLLLAGASYFLWRQQKEKIALSRETERERELKEMGYAATKQEISLREKLQDELKWRKIRYMARGEKSLAYHEWKMALFKPADVILDPDTANAILLVSEDQRSVQRAEEPRDLPDNPERFEWRYCVLGCENFTSGRHYWEVEVGDRKEWHIGVCSKNVERKKGWVKMTPENGYWTMGPTDGNKYRALTEPRTNLKLPEPPRKVGIFLDYETGEISFYNAMDGSHIYTFPHTSFSEPVYPVFRILTLEPTALTICPTPKEVDRSPNPDLVLDHSLETPVTPALANESGEPQAEVTSLLLPANAGAEGVSPSTTTSQNHKPQACTEALY</sequence>
<organism>
    <name type="scientific">Pongo abelii</name>
    <name type="common">Sumatran orangutan</name>
    <name type="synonym">Pongo pygmaeus abelii</name>
    <dbReference type="NCBI Taxonomy" id="9601"/>
    <lineage>
        <taxon>Eukaryota</taxon>
        <taxon>Metazoa</taxon>
        <taxon>Chordata</taxon>
        <taxon>Craniata</taxon>
        <taxon>Vertebrata</taxon>
        <taxon>Euteleostomi</taxon>
        <taxon>Mammalia</taxon>
        <taxon>Eutheria</taxon>
        <taxon>Euarchontoglires</taxon>
        <taxon>Primates</taxon>
        <taxon>Haplorrhini</taxon>
        <taxon>Catarrhini</taxon>
        <taxon>Hominidae</taxon>
        <taxon>Pongo</taxon>
    </lineage>
</organism>
<accession>Q5R996</accession>
<name>BT3A3_PONAB</name>
<keyword id="KW-1015">Disulfide bond</keyword>
<keyword id="KW-0325">Glycoprotein</keyword>
<keyword id="KW-0393">Immunoglobulin domain</keyword>
<keyword id="KW-0472">Membrane</keyword>
<keyword id="KW-1185">Reference proteome</keyword>
<keyword id="KW-0677">Repeat</keyword>
<keyword id="KW-0732">Signal</keyword>
<keyword id="KW-0812">Transmembrane</keyword>
<keyword id="KW-1133">Transmembrane helix</keyword>
<feature type="signal peptide" evidence="2">
    <location>
        <begin position="1"/>
        <end position="29"/>
    </location>
</feature>
<feature type="chain" id="PRO_0000014535" description="Butyrophilin subfamily 3 member A3">
    <location>
        <begin position="30"/>
        <end position="585"/>
    </location>
</feature>
<feature type="topological domain" description="Extracellular" evidence="2">
    <location>
        <begin position="30"/>
        <end position="248"/>
    </location>
</feature>
<feature type="transmembrane region" description="Helical" evidence="2">
    <location>
        <begin position="249"/>
        <end position="269"/>
    </location>
</feature>
<feature type="topological domain" description="Cytoplasmic" evidence="2">
    <location>
        <begin position="270"/>
        <end position="585"/>
    </location>
</feature>
<feature type="domain" description="Ig-like V-type 1">
    <location>
        <begin position="30"/>
        <end position="139"/>
    </location>
</feature>
<feature type="domain" description="Ig-like V-type 2">
    <location>
        <begin position="145"/>
        <end position="236"/>
    </location>
</feature>
<feature type="domain" description="B30.2/SPRY" evidence="4">
    <location>
        <begin position="322"/>
        <end position="518"/>
    </location>
</feature>
<feature type="region of interest" description="Disordered" evidence="5">
    <location>
        <begin position="560"/>
        <end position="585"/>
    </location>
</feature>
<feature type="compositionally biased region" description="Polar residues" evidence="5">
    <location>
        <begin position="566"/>
        <end position="576"/>
    </location>
</feature>
<feature type="glycosylation site" description="N-linked (GlcNAc...) asparagine" evidence="2">
    <location>
        <position position="115"/>
    </location>
</feature>
<feature type="disulfide bond" evidence="3">
    <location>
        <begin position="52"/>
        <end position="126"/>
    </location>
</feature>
<feature type="disulfide bond" evidence="3">
    <location>
        <begin position="166"/>
        <end position="220"/>
    </location>
</feature>
<gene>
    <name type="primary">BTN3A3</name>
</gene>
<comment type="subcellular location">
    <subcellularLocation>
        <location evidence="1">Membrane</location>
        <topology evidence="1">Single-pass type I membrane protein</topology>
    </subcellularLocation>
</comment>
<comment type="similarity">
    <text evidence="6">Belongs to the immunoglobulin superfamily. BTN/MOG family.</text>
</comment>
<reference key="1">
    <citation type="submission" date="2004-11" db="EMBL/GenBank/DDBJ databases">
        <authorList>
            <consortium name="The German cDNA consortium"/>
        </authorList>
    </citation>
    <scope>NUCLEOTIDE SEQUENCE [LARGE SCALE MRNA]</scope>
    <source>
        <tissue>Brain cortex</tissue>
    </source>
</reference>
<protein>
    <recommendedName>
        <fullName>Butyrophilin subfamily 3 member A3</fullName>
    </recommendedName>
</protein>
<proteinExistence type="evidence at transcript level"/>